<dbReference type="EMBL" id="M21647">
    <property type="protein sequence ID" value="AAA79775.1"/>
    <property type="molecule type" value="Genomic_RNA"/>
</dbReference>
<dbReference type="EMBL" id="CY014671">
    <property type="protein sequence ID" value="ABI84534.1"/>
    <property type="molecule type" value="Genomic_RNA"/>
</dbReference>
<dbReference type="PIR" id="B29244">
    <property type="entry name" value="HMIV84"/>
</dbReference>
<dbReference type="PDB" id="4D00">
    <property type="method" value="X-ray"/>
    <property type="resolution" value="2.50 A"/>
    <property type="chains" value="A/C/E=18-340"/>
</dbReference>
<dbReference type="PDBsum" id="4D00"/>
<dbReference type="SMR" id="P12439"/>
<dbReference type="GlyCosmos" id="P12439">
    <property type="glycosylation" value="5 sites, No reported glycans"/>
</dbReference>
<dbReference type="PRO" id="PR:Q0A448"/>
<dbReference type="Proteomes" id="UP000008217">
    <property type="component" value="Genome"/>
</dbReference>
<dbReference type="GO" id="GO:0020002">
    <property type="term" value="C:host cell plasma membrane"/>
    <property type="evidence" value="ECO:0007669"/>
    <property type="project" value="UniProtKB-SubCell"/>
</dbReference>
<dbReference type="GO" id="GO:0016020">
    <property type="term" value="C:membrane"/>
    <property type="evidence" value="ECO:0007669"/>
    <property type="project" value="UniProtKB-UniRule"/>
</dbReference>
<dbReference type="GO" id="GO:0019031">
    <property type="term" value="C:viral envelope"/>
    <property type="evidence" value="ECO:0007669"/>
    <property type="project" value="UniProtKB-UniRule"/>
</dbReference>
<dbReference type="GO" id="GO:0055036">
    <property type="term" value="C:virion membrane"/>
    <property type="evidence" value="ECO:0007669"/>
    <property type="project" value="UniProtKB-SubCell"/>
</dbReference>
<dbReference type="GO" id="GO:0046789">
    <property type="term" value="F:host cell surface receptor binding"/>
    <property type="evidence" value="ECO:0007669"/>
    <property type="project" value="UniProtKB-UniRule"/>
</dbReference>
<dbReference type="GO" id="GO:0075512">
    <property type="term" value="P:clathrin-dependent endocytosis of virus by host cell"/>
    <property type="evidence" value="ECO:0007669"/>
    <property type="project" value="UniProtKB-UniRule"/>
</dbReference>
<dbReference type="GO" id="GO:0039654">
    <property type="term" value="P:fusion of virus membrane with host endosome membrane"/>
    <property type="evidence" value="ECO:0007669"/>
    <property type="project" value="UniProtKB-UniRule"/>
</dbReference>
<dbReference type="GO" id="GO:0019064">
    <property type="term" value="P:fusion of virus membrane with host plasma membrane"/>
    <property type="evidence" value="ECO:0007669"/>
    <property type="project" value="InterPro"/>
</dbReference>
<dbReference type="GO" id="GO:0046761">
    <property type="term" value="P:viral budding from plasma membrane"/>
    <property type="evidence" value="ECO:0007669"/>
    <property type="project" value="UniProtKB-UniRule"/>
</dbReference>
<dbReference type="GO" id="GO:0019062">
    <property type="term" value="P:virion attachment to host cell"/>
    <property type="evidence" value="ECO:0007669"/>
    <property type="project" value="UniProtKB-KW"/>
</dbReference>
<dbReference type="Gene3D" id="3.90.20.10">
    <property type="match status" value="1"/>
</dbReference>
<dbReference type="Gene3D" id="3.90.209.20">
    <property type="match status" value="1"/>
</dbReference>
<dbReference type="Gene3D" id="2.10.77.10">
    <property type="entry name" value="Hemagglutinin Chain A, Domain 2"/>
    <property type="match status" value="1"/>
</dbReference>
<dbReference type="HAMAP" id="MF_04072">
    <property type="entry name" value="INFV_HEMA"/>
    <property type="match status" value="1"/>
</dbReference>
<dbReference type="InterPro" id="IPR008980">
    <property type="entry name" value="Capsid_hemagglutn"/>
</dbReference>
<dbReference type="InterPro" id="IPR013828">
    <property type="entry name" value="Hemagglutn_HA1_a/b_dom_sf"/>
</dbReference>
<dbReference type="InterPro" id="IPR000149">
    <property type="entry name" value="Hemagglutn_influenz_A"/>
</dbReference>
<dbReference type="InterPro" id="IPR001364">
    <property type="entry name" value="Hemagglutn_influenz_A/B"/>
</dbReference>
<dbReference type="Pfam" id="PF00509">
    <property type="entry name" value="Hemagglutinin"/>
    <property type="match status" value="1"/>
</dbReference>
<dbReference type="PRINTS" id="PR00330">
    <property type="entry name" value="HEMAGGLUTN1"/>
</dbReference>
<dbReference type="PRINTS" id="PR00329">
    <property type="entry name" value="HEMAGGLUTN12"/>
</dbReference>
<dbReference type="SUPFAM" id="SSF58064">
    <property type="entry name" value="Influenza hemagglutinin (stalk)"/>
    <property type="match status" value="1"/>
</dbReference>
<dbReference type="SUPFAM" id="SSF49818">
    <property type="entry name" value="Viral protein domain"/>
    <property type="match status" value="1"/>
</dbReference>
<protein>
    <recommendedName>
        <fullName evidence="1">Hemagglutinin</fullName>
    </recommendedName>
    <component>
        <recommendedName>
            <fullName evidence="1">Hemagglutinin HA1 chain</fullName>
        </recommendedName>
    </component>
    <component>
        <recommendedName>
            <fullName evidence="1">Hemagglutinin HA2 chain</fullName>
        </recommendedName>
    </component>
</protein>
<reference key="1">
    <citation type="journal article" date="1988" name="Virology">
        <title>The structure of serotype H10 hemagglutinin of influenza A virus: comparison of an apathogenic avian and a mammalian strain pathogenic for mink.</title>
        <authorList>
            <person name="Feldmann H."/>
            <person name="Kretzschmar E."/>
            <person name="Klingeborn B."/>
            <person name="Rott R."/>
            <person name="Klenk H.-D."/>
            <person name="Garten W."/>
        </authorList>
    </citation>
    <scope>NUCLEOTIDE SEQUENCE [GENOMIC RNA]</scope>
</reference>
<reference key="2">
    <citation type="journal article" date="2006" name="Science">
        <title>Large-scale sequence analysis of avian influenza isolates.</title>
        <authorList>
            <person name="Obenauer J.C."/>
            <person name="Denson J."/>
            <person name="Mehta P.K."/>
            <person name="Su X."/>
            <person name="Mukatira S."/>
            <person name="Finkelstein D.B."/>
            <person name="Xu X."/>
            <person name="Wang J."/>
            <person name="Ma J."/>
            <person name="Fan Y."/>
            <person name="Rakestraw K.M."/>
            <person name="Webster R.G."/>
            <person name="Hoffmann E."/>
            <person name="Krauss S."/>
            <person name="Zheng J."/>
            <person name="Zhang Z."/>
            <person name="Naeve C.W."/>
        </authorList>
    </citation>
    <scope>NUCLEOTIDE SEQUENCE [GENOMIC RNA]</scope>
</reference>
<evidence type="ECO:0000255" key="1">
    <source>
        <dbReference type="HAMAP-Rule" id="MF_04072"/>
    </source>
</evidence>
<evidence type="ECO:0000305" key="2"/>
<evidence type="ECO:0007829" key="3">
    <source>
        <dbReference type="PDB" id="4D00"/>
    </source>
</evidence>
<accession>P12439</accession>
<accession>Q0A448</accession>
<keyword id="KW-0002">3D-structure</keyword>
<keyword id="KW-1167">Clathrin- and caveolin-independent endocytosis of virus by host</keyword>
<keyword id="KW-1165">Clathrin-mediated endocytosis of virus by host</keyword>
<keyword id="KW-1015">Disulfide bond</keyword>
<keyword id="KW-1170">Fusion of virus membrane with host endosomal membrane</keyword>
<keyword id="KW-1168">Fusion of virus membrane with host membrane</keyword>
<keyword id="KW-0325">Glycoprotein</keyword>
<keyword id="KW-0348">Hemagglutinin</keyword>
<keyword id="KW-1032">Host cell membrane</keyword>
<keyword id="KW-1043">Host membrane</keyword>
<keyword id="KW-0945">Host-virus interaction</keyword>
<keyword id="KW-0449">Lipoprotein</keyword>
<keyword id="KW-0472">Membrane</keyword>
<keyword id="KW-0564">Palmitate</keyword>
<keyword id="KW-0732">Signal</keyword>
<keyword id="KW-0812">Transmembrane</keyword>
<keyword id="KW-1133">Transmembrane helix</keyword>
<keyword id="KW-1161">Viral attachment to host cell</keyword>
<keyword id="KW-0261">Viral envelope protein</keyword>
<keyword id="KW-1162">Viral penetration into host cytoplasm</keyword>
<keyword id="KW-0946">Virion</keyword>
<keyword id="KW-1164">Virus endocytosis by host</keyword>
<keyword id="KW-1160">Virus entry into host cell</keyword>
<proteinExistence type="evidence at protein level"/>
<organismHost>
    <name type="scientific">Aves</name>
    <dbReference type="NCBI Taxonomy" id="8782"/>
</organismHost>
<name>HEMA_I49A1</name>
<feature type="signal peptide" evidence="1">
    <location>
        <begin position="1"/>
        <end position="16"/>
    </location>
</feature>
<feature type="chain" id="PRO_0000440508" description="Hemagglutinin" evidence="1">
    <location>
        <begin position="17"/>
        <end position="561"/>
    </location>
</feature>
<feature type="chain" id="PRO_0000039030" description="Hemagglutinin HA1 chain" evidence="1">
    <location>
        <begin position="18"/>
        <end position="339"/>
    </location>
</feature>
<feature type="chain" id="PRO_0000039031" description="Hemagglutinin HA2 chain" evidence="1">
    <location>
        <begin position="341"/>
        <end position="561"/>
    </location>
</feature>
<feature type="topological domain" description="Extracellular" evidence="1">
    <location>
        <begin position="18"/>
        <end position="524"/>
    </location>
</feature>
<feature type="transmembrane region" description="Helical" evidence="1">
    <location>
        <begin position="525"/>
        <end position="545"/>
    </location>
</feature>
<feature type="topological domain" description="Cytoplasmic" evidence="1">
    <location>
        <begin position="546"/>
        <end position="561"/>
    </location>
</feature>
<feature type="site" description="Cleavage; by host" evidence="1">
    <location>
        <begin position="340"/>
        <end position="341"/>
    </location>
</feature>
<feature type="lipid moiety-binding region" description="S-palmitoyl cysteine; by host" evidence="1">
    <location>
        <position position="557"/>
    </location>
</feature>
<feature type="lipid moiety-binding region" description="S-palmitoyl cysteine; by host" evidence="1">
    <location>
        <position position="560"/>
    </location>
</feature>
<feature type="glycosylation site" description="N-linked (GlcNAc...) asparagine; by host" evidence="1">
    <location>
        <position position="29"/>
    </location>
</feature>
<feature type="glycosylation site" description="N-linked (GlcNAc...) asparagine; by host" evidence="1">
    <location>
        <position position="45"/>
    </location>
</feature>
<feature type="glycosylation site" description="N-linked (GlcNAc...) asparagine; by host" evidence="1">
    <location>
        <position position="252"/>
    </location>
</feature>
<feature type="glycosylation site" description="N-linked (GlcNAc...) asparagine; by host" evidence="1">
    <location>
        <position position="422"/>
    </location>
</feature>
<feature type="glycosylation site" description="N-linked (GlcNAc...) asparagine; by host" evidence="1">
    <location>
        <position position="494"/>
    </location>
</feature>
<feature type="disulfide bond" description="Interchain (between HA1 and HA2 chains)" evidence="1">
    <location>
        <begin position="21"/>
        <end position="477"/>
    </location>
</feature>
<feature type="disulfide bond" evidence="1">
    <location>
        <begin position="59"/>
        <end position="287"/>
    </location>
</feature>
<feature type="disulfide bond" evidence="1">
    <location>
        <begin position="71"/>
        <end position="83"/>
    </location>
</feature>
<feature type="disulfide bond" evidence="1">
    <location>
        <begin position="104"/>
        <end position="147"/>
    </location>
</feature>
<feature type="disulfide bond" evidence="1">
    <location>
        <begin position="291"/>
        <end position="315"/>
    </location>
</feature>
<feature type="disulfide bond" evidence="1">
    <location>
        <begin position="484"/>
        <end position="488"/>
    </location>
</feature>
<feature type="sequence conflict" description="In Ref. 2; ABI84534." evidence="2" ref="2">
    <original>T</original>
    <variation>N</variation>
    <location>
        <position position="139"/>
    </location>
</feature>
<feature type="sequence conflict" description="In Ref. 2; ABI84534." evidence="2" ref="2">
    <original>D</original>
    <variation>H</variation>
    <location>
        <position position="257"/>
    </location>
</feature>
<feature type="sequence conflict" description="In Ref. 2; ABI84534." evidence="2" ref="2">
    <original>D</original>
    <variation>G</variation>
    <location>
        <position position="274"/>
    </location>
</feature>
<feature type="sequence conflict" description="In Ref. 2; ABI84534." evidence="2" ref="2">
    <original>N</original>
    <variation>Q</variation>
    <location>
        <position position="435"/>
    </location>
</feature>
<feature type="sequence conflict" description="In Ref. 2; ABI84534." evidence="2" ref="2">
    <original>P</original>
    <variation>S</variation>
    <location>
        <position position="515"/>
    </location>
</feature>
<feature type="sequence conflict" description="In Ref. 2; ABI84534." evidence="2" ref="2">
    <original>E</original>
    <variation>A</variation>
    <location>
        <position position="533"/>
    </location>
</feature>
<feature type="strand" evidence="3">
    <location>
        <begin position="18"/>
        <end position="25"/>
    </location>
</feature>
<feature type="strand" evidence="3">
    <location>
        <begin position="31"/>
        <end position="33"/>
    </location>
</feature>
<feature type="strand" evidence="3">
    <location>
        <begin position="41"/>
        <end position="44"/>
    </location>
</feature>
<feature type="strand" evidence="3">
    <location>
        <begin position="46"/>
        <end position="48"/>
    </location>
</feature>
<feature type="strand" evidence="3">
    <location>
        <begin position="55"/>
        <end position="60"/>
    </location>
</feature>
<feature type="strand" evidence="3">
    <location>
        <begin position="65"/>
        <end position="67"/>
    </location>
</feature>
<feature type="helix" evidence="3">
    <location>
        <begin position="73"/>
        <end position="78"/>
    </location>
</feature>
<feature type="helix" evidence="3">
    <location>
        <begin position="81"/>
        <end position="86"/>
    </location>
</feature>
<feature type="strand" evidence="3">
    <location>
        <begin position="87"/>
        <end position="90"/>
    </location>
</feature>
<feature type="strand" evidence="3">
    <location>
        <begin position="92"/>
        <end position="96"/>
    </location>
</feature>
<feature type="helix" evidence="3">
    <location>
        <begin position="112"/>
        <end position="119"/>
    </location>
</feature>
<feature type="strand" evidence="3">
    <location>
        <begin position="123"/>
        <end position="129"/>
    </location>
</feature>
<feature type="strand" evidence="3">
    <location>
        <begin position="138"/>
        <end position="142"/>
    </location>
</feature>
<feature type="strand" evidence="3">
    <location>
        <begin position="144"/>
        <end position="149"/>
    </location>
</feature>
<feature type="strand" evidence="3">
    <location>
        <begin position="152"/>
        <end position="154"/>
    </location>
</feature>
<feature type="strand" evidence="3">
    <location>
        <begin position="159"/>
        <end position="166"/>
    </location>
</feature>
<feature type="strand" evidence="3">
    <location>
        <begin position="174"/>
        <end position="179"/>
    </location>
</feature>
<feature type="strand" evidence="3">
    <location>
        <begin position="182"/>
        <end position="184"/>
    </location>
</feature>
<feature type="strand" evidence="3">
    <location>
        <begin position="186"/>
        <end position="194"/>
    </location>
</feature>
<feature type="helix" evidence="3">
    <location>
        <begin position="198"/>
        <end position="205"/>
    </location>
</feature>
<feature type="strand" evidence="3">
    <location>
        <begin position="212"/>
        <end position="215"/>
    </location>
</feature>
<feature type="strand" evidence="3">
    <location>
        <begin position="220"/>
        <end position="223"/>
    </location>
</feature>
<feature type="strand" evidence="3">
    <location>
        <begin position="239"/>
        <end position="247"/>
    </location>
</feature>
<feature type="strand" evidence="3">
    <location>
        <begin position="252"/>
        <end position="259"/>
    </location>
</feature>
<feature type="strand" evidence="3">
    <location>
        <begin position="261"/>
        <end position="270"/>
    </location>
</feature>
<feature type="strand" evidence="3">
    <location>
        <begin position="275"/>
        <end position="278"/>
    </location>
</feature>
<feature type="strand" evidence="3">
    <location>
        <begin position="283"/>
        <end position="288"/>
    </location>
</feature>
<feature type="strand" evidence="3">
    <location>
        <begin position="290"/>
        <end position="293"/>
    </location>
</feature>
<feature type="strand" evidence="3">
    <location>
        <begin position="301"/>
        <end position="305"/>
    </location>
</feature>
<feature type="strand" evidence="3">
    <location>
        <begin position="311"/>
        <end position="314"/>
    </location>
</feature>
<feature type="strand" evidence="3">
    <location>
        <begin position="325"/>
        <end position="327"/>
    </location>
</feature>
<sequence>MYKVVVIIALLGAVKGLDRICLGHHAVANGTIVKTLTNEQEEVTNATETVESTNLNKLCMKGRSYKDLGNCHPVGMLIGTPVCDPHLTGTWDTLIERENAIAHCYPGATINEEALRQKIMESGGISKMSTGFTYGSSITSAGTTKACMRNGGDSFYAELKWLVSKTKGQNFPQTTNTYRNTDTAEHLIIWGIHHPSSTQEKNDLYGTQSLSISVESSTYQNNFVPVVGARPQVNGQSGRIDFHWTLVQPGDNITFSDNGGLIAPSRVSKLTGRDLGIQSEALIDNSCESKCFWRGGSINTKLPFQNLSPRTVGQCPKYVNQRSLLLATGMRNVPEVVQGRGLFGAIAGFIENGWEGMVDGWYGFRHQNAQGTGQAADYKSTQAAIDQITGKLNRLIEKTNTEFESIESEFSETEHQIGNVINWTKDSITDIWTYNAELLVAMENQHTIDMADSEMLNLYERVRKQLRQNAEEDGKGCFEIYHTCDDSCMESIRNNTYDHSQYREEALLNRLNINPVKLSSGYKDIILWFSFGESCFVLLAVVMGLVFFCLKNGNMRCTICI</sequence>
<organism>
    <name type="scientific">Influenza A virus (strain A/Duck/Germany/1949 H10N7)</name>
    <dbReference type="NCBI Taxonomy" id="382838"/>
    <lineage>
        <taxon>Viruses</taxon>
        <taxon>Riboviria</taxon>
        <taxon>Orthornavirae</taxon>
        <taxon>Negarnaviricota</taxon>
        <taxon>Polyploviricotina</taxon>
        <taxon>Insthoviricetes</taxon>
        <taxon>Articulavirales</taxon>
        <taxon>Orthomyxoviridae</taxon>
        <taxon>Alphainfluenzavirus</taxon>
        <taxon>Alphainfluenzavirus influenzae</taxon>
        <taxon>Influenza A virus</taxon>
    </lineage>
</organism>
<gene>
    <name evidence="1" type="primary">HA</name>
</gene>
<comment type="function">
    <text>Binds to sialic acid-containing receptors on the cell surface, bringing about the attachment of the virus particle to the cell. This attachment induces virion internalization of about two third of the virus particles through clathrin-dependent endocytosis and about one third through a clathrin- and caveolin-independent pathway. Plays a major role in the determination of host range restriction and virulence. Class I viral fusion protein. Responsible for penetration of the virus into the cell cytoplasm by mediating the fusion of the membrane of the endocytosed virus particle with the endosomal membrane. Low pH in endosomes induces an irreversible conformational change in HA2, releasing the fusion hydrophobic peptide. Several trimers are required to form a competent fusion pore.</text>
</comment>
<comment type="function">
    <text evidence="1">Binds to sialic acid-containing receptors on the cell surface, bringing about the attachment of the virus particle to the cell. This attachment induces virion internalization either through clathrin-dependent endocytosis or through clathrin- and caveolin-independent pathway. Plays a major role in the determination of host range restriction and virulence. Class I viral fusion protein. Responsible for penetration of the virus into the cell cytoplasm by mediating the fusion of the membrane of the endocytosed virus particle with the endosomal membrane. Low pH in endosomes induces an irreversible conformational change in HA2, releasing the fusion hydrophobic peptide. Several trimers are required to form a competent fusion pore.</text>
</comment>
<comment type="subunit">
    <text evidence="1">Homotrimer of disulfide-linked HA1-HA2.</text>
</comment>
<comment type="subcellular location">
    <subcellularLocation>
        <location evidence="1">Virion membrane</location>
        <topology evidence="1">Single-pass type I membrane protein</topology>
    </subcellularLocation>
    <subcellularLocation>
        <location evidence="1">Host apical cell membrane</location>
        <topology evidence="1">Single-pass type I membrane protein</topology>
    </subcellularLocation>
    <text evidence="1">Targeted to the apical plasma membrane in epithelial polarized cells through a signal present in the transmembrane domain. Associated with glycosphingolipid- and cholesterol-enriched detergent-resistant lipid rafts.</text>
</comment>
<comment type="PTM">
    <text evidence="1">Palmitoylated.</text>
</comment>
<comment type="PTM">
    <text evidence="1">In natural infection, inactive HA is matured into HA1 and HA2 outside the cell by one or more trypsin-like, arginine-specific endoprotease secreted by the bronchial epithelial cells. One identified protease that may be involved in this process is secreted in lungs by club cells.</text>
</comment>
<comment type="miscellaneous">
    <text>Major glycoprotein, comprises over 80% of the envelope proteins present in virus particle.</text>
</comment>
<comment type="miscellaneous">
    <text>The extent of infection into host organism is determined by HA. Influenza viruses bud from the apical surface of polarized epithelial cells (e.g. bronchial epithelial cells) into lumen of lungs and are therefore usually pneumotropic. The reason is that HA is cleaved by tryptase clara which is restricted to lungs. However, HAs of H5 and H7 pantropic avian viruses subtypes can be cleaved by furin and subtilisin-type enzymes, allowing the virus to grow in other organs than lungs.</text>
</comment>
<comment type="miscellaneous">
    <text evidence="2">The influenza A genome consist of 8 RNA segments. Genetic variation of hemagglutinin and/or neuraminidase genes results in the emergence of new influenza strains. The mechanism of variation can be the result of point mutations or the result of genetic reassortment between segments of two different strains.</text>
</comment>
<comment type="similarity">
    <text evidence="1">Belongs to the influenza viruses hemagglutinin family.</text>
</comment>